<evidence type="ECO:0000250" key="1">
    <source>
        <dbReference type="UniProtKB" id="Q76KF0"/>
    </source>
</evidence>
<evidence type="ECO:0000250" key="2">
    <source>
        <dbReference type="UniProtKB" id="Q8NFY4"/>
    </source>
</evidence>
<evidence type="ECO:0000255" key="3"/>
<evidence type="ECO:0000255" key="4">
    <source>
        <dbReference type="PROSITE-ProRule" id="PRU00352"/>
    </source>
</evidence>
<evidence type="ECO:0000256" key="5">
    <source>
        <dbReference type="SAM" id="MobiDB-lite"/>
    </source>
</evidence>
<evidence type="ECO:0000305" key="6"/>
<accession>Q5R7F5</accession>
<organism>
    <name type="scientific">Pongo abelii</name>
    <name type="common">Sumatran orangutan</name>
    <name type="synonym">Pongo pygmaeus abelii</name>
    <dbReference type="NCBI Taxonomy" id="9601"/>
    <lineage>
        <taxon>Eukaryota</taxon>
        <taxon>Metazoa</taxon>
        <taxon>Chordata</taxon>
        <taxon>Craniata</taxon>
        <taxon>Vertebrata</taxon>
        <taxon>Euteleostomi</taxon>
        <taxon>Mammalia</taxon>
        <taxon>Eutheria</taxon>
        <taxon>Euarchontoglires</taxon>
        <taxon>Primates</taxon>
        <taxon>Haplorrhini</taxon>
        <taxon>Catarrhini</taxon>
        <taxon>Hominidae</taxon>
        <taxon>Pongo</taxon>
    </lineage>
</organism>
<reference key="1">
    <citation type="submission" date="2004-11" db="EMBL/GenBank/DDBJ databases">
        <authorList>
            <consortium name="The German cDNA consortium"/>
        </authorList>
    </citation>
    <scope>NUCLEOTIDE SEQUENCE [LARGE SCALE MRNA]</scope>
    <source>
        <tissue>Brain cortex</tissue>
    </source>
</reference>
<protein>
    <recommendedName>
        <fullName>Semaphorin-6D</fullName>
    </recommendedName>
</protein>
<keyword id="KW-1003">Cell membrane</keyword>
<keyword id="KW-0217">Developmental protein</keyword>
<keyword id="KW-0221">Differentiation</keyword>
<keyword id="KW-1015">Disulfide bond</keyword>
<keyword id="KW-0325">Glycoprotein</keyword>
<keyword id="KW-0472">Membrane</keyword>
<keyword id="KW-0524">Neurogenesis</keyword>
<keyword id="KW-0597">Phosphoprotein</keyword>
<keyword id="KW-1185">Reference proteome</keyword>
<keyword id="KW-0732">Signal</keyword>
<keyword id="KW-0812">Transmembrane</keyword>
<keyword id="KW-1133">Transmembrane helix</keyword>
<feature type="signal peptide" evidence="3">
    <location>
        <begin position="1"/>
        <end position="20"/>
    </location>
</feature>
<feature type="chain" id="PRO_0000044617" description="Semaphorin-6D">
    <location>
        <begin position="21"/>
        <end position="1017"/>
    </location>
</feature>
<feature type="topological domain" description="Extracellular" evidence="3">
    <location>
        <begin position="21"/>
        <end position="606"/>
    </location>
</feature>
<feature type="transmembrane region" description="Helical" evidence="3">
    <location>
        <begin position="607"/>
        <end position="627"/>
    </location>
</feature>
<feature type="topological domain" description="Cytoplasmic" evidence="3">
    <location>
        <begin position="628"/>
        <end position="1017"/>
    </location>
</feature>
<feature type="domain" description="Sema" evidence="4">
    <location>
        <begin position="27"/>
        <end position="512"/>
    </location>
</feature>
<feature type="domain" description="PSI">
    <location>
        <begin position="514"/>
        <end position="569"/>
    </location>
</feature>
<feature type="region of interest" description="Disordered" evidence="5">
    <location>
        <begin position="688"/>
        <end position="719"/>
    </location>
</feature>
<feature type="region of interest" description="Disordered" evidence="5">
    <location>
        <begin position="731"/>
        <end position="769"/>
    </location>
</feature>
<feature type="region of interest" description="Disordered" evidence="5">
    <location>
        <begin position="783"/>
        <end position="818"/>
    </location>
</feature>
<feature type="region of interest" description="Disordered" evidence="5">
    <location>
        <begin position="873"/>
        <end position="912"/>
    </location>
</feature>
<feature type="region of interest" description="Disordered" evidence="5">
    <location>
        <begin position="965"/>
        <end position="1017"/>
    </location>
</feature>
<feature type="compositionally biased region" description="Basic and acidic residues" evidence="5">
    <location>
        <begin position="734"/>
        <end position="749"/>
    </location>
</feature>
<feature type="compositionally biased region" description="Polar residues" evidence="5">
    <location>
        <begin position="875"/>
        <end position="886"/>
    </location>
</feature>
<feature type="compositionally biased region" description="Polar residues" evidence="5">
    <location>
        <begin position="965"/>
        <end position="981"/>
    </location>
</feature>
<feature type="modified residue" description="Phosphoserine" evidence="2">
    <location>
        <position position="667"/>
    </location>
</feature>
<feature type="modified residue" description="Phosphoserine" evidence="1">
    <location>
        <position position="678"/>
    </location>
</feature>
<feature type="modified residue" description="Phosphoserine" evidence="2">
    <location>
        <position position="688"/>
    </location>
</feature>
<feature type="modified residue" description="Phosphothreonine" evidence="2">
    <location>
        <position position="717"/>
    </location>
</feature>
<feature type="modified residue" description="Phosphoserine" evidence="2">
    <location>
        <position position="875"/>
    </location>
</feature>
<feature type="modified residue" description="Phosphoserine" evidence="2">
    <location>
        <position position="901"/>
    </location>
</feature>
<feature type="modified residue" description="Phosphoserine" evidence="2">
    <location>
        <position position="927"/>
    </location>
</feature>
<feature type="glycosylation site" description="N-linked (GlcNAc...) asparagine" evidence="3">
    <location>
        <position position="51"/>
    </location>
</feature>
<feature type="glycosylation site" description="N-linked (GlcNAc...) asparagine" evidence="3">
    <location>
        <position position="283"/>
    </location>
</feature>
<feature type="glycosylation site" description="N-linked (GlcNAc...) asparagine" evidence="3">
    <location>
        <position position="435"/>
    </location>
</feature>
<feature type="glycosylation site" description="N-linked (GlcNAc...) asparagine" evidence="3">
    <location>
        <position position="461"/>
    </location>
</feature>
<feature type="disulfide bond" evidence="4">
    <location>
        <begin position="108"/>
        <end position="118"/>
    </location>
</feature>
<feature type="disulfide bond" evidence="4">
    <location>
        <begin position="136"/>
        <end position="145"/>
    </location>
</feature>
<feature type="disulfide bond" evidence="4">
    <location>
        <begin position="259"/>
        <end position="370"/>
    </location>
</feature>
<feature type="disulfide bond" evidence="4">
    <location>
        <begin position="284"/>
        <end position="329"/>
    </location>
</feature>
<feature type="disulfide bond" evidence="4">
    <location>
        <begin position="477"/>
        <end position="506"/>
    </location>
</feature>
<feature type="disulfide bond" evidence="4">
    <location>
        <begin position="515"/>
        <end position="533"/>
    </location>
</feature>
<feature type="disulfide bond" evidence="4">
    <location>
        <begin position="521"/>
        <end position="568"/>
    </location>
</feature>
<feature type="disulfide bond" evidence="4">
    <location>
        <begin position="525"/>
        <end position="541"/>
    </location>
</feature>
<comment type="function">
    <text evidence="1 2">Shows growth cone collapsing activity on dorsal root ganglion (DRG) neurons in vitro. May be a stop signal for the DRG neurons in their target areas, and possibly also for other neurons. May also be involved in the maintenance and remodeling of neuronal connections (By similarity). Ligand of TREM2 with PLXNA1 as coreceptor in dendritic cells, plays a role in the generation of immune responses and skeletal homeostasis (By similarity).</text>
</comment>
<comment type="subcellular location">
    <subcellularLocation>
        <location evidence="1">Cell membrane</location>
        <topology evidence="3">Single-pass type I membrane protein</topology>
    </subcellularLocation>
</comment>
<comment type="similarity">
    <text evidence="6">Belongs to the semaphorin family.</text>
</comment>
<dbReference type="EMBL" id="CR860163">
    <property type="protein sequence ID" value="CAH92305.1"/>
    <property type="molecule type" value="mRNA"/>
</dbReference>
<dbReference type="RefSeq" id="NP_001126349.1">
    <property type="nucleotide sequence ID" value="NM_001132877.2"/>
</dbReference>
<dbReference type="SMR" id="Q5R7F5"/>
<dbReference type="STRING" id="9601.ENSPPYP00000007307"/>
<dbReference type="GlyCosmos" id="Q5R7F5">
    <property type="glycosylation" value="4 sites, No reported glycans"/>
</dbReference>
<dbReference type="GeneID" id="100173330"/>
<dbReference type="KEGG" id="pon:100173330"/>
<dbReference type="CTD" id="80031"/>
<dbReference type="eggNOG" id="KOG3611">
    <property type="taxonomic scope" value="Eukaryota"/>
</dbReference>
<dbReference type="InParanoid" id="Q5R7F5"/>
<dbReference type="OrthoDB" id="9988752at2759"/>
<dbReference type="Proteomes" id="UP000001595">
    <property type="component" value="Unplaced"/>
</dbReference>
<dbReference type="GO" id="GO:0005886">
    <property type="term" value="C:plasma membrane"/>
    <property type="evidence" value="ECO:0007669"/>
    <property type="project" value="UniProtKB-SubCell"/>
</dbReference>
<dbReference type="GO" id="GO:0045499">
    <property type="term" value="F:chemorepellent activity"/>
    <property type="evidence" value="ECO:0007669"/>
    <property type="project" value="TreeGrafter"/>
</dbReference>
<dbReference type="GO" id="GO:0048018">
    <property type="term" value="F:receptor ligand activity"/>
    <property type="evidence" value="ECO:0000250"/>
    <property type="project" value="UniProtKB"/>
</dbReference>
<dbReference type="GO" id="GO:0030215">
    <property type="term" value="F:semaphorin receptor binding"/>
    <property type="evidence" value="ECO:0007669"/>
    <property type="project" value="InterPro"/>
</dbReference>
<dbReference type="GO" id="GO:0007411">
    <property type="term" value="P:axon guidance"/>
    <property type="evidence" value="ECO:0007669"/>
    <property type="project" value="TreeGrafter"/>
</dbReference>
<dbReference type="GO" id="GO:0001755">
    <property type="term" value="P:neural crest cell migration"/>
    <property type="evidence" value="ECO:0007669"/>
    <property type="project" value="TreeGrafter"/>
</dbReference>
<dbReference type="GO" id="GO:0030335">
    <property type="term" value="P:positive regulation of cell migration"/>
    <property type="evidence" value="ECO:0007669"/>
    <property type="project" value="TreeGrafter"/>
</dbReference>
<dbReference type="GO" id="GO:0071526">
    <property type="term" value="P:semaphorin-plexin signaling pathway"/>
    <property type="evidence" value="ECO:0007669"/>
    <property type="project" value="TreeGrafter"/>
</dbReference>
<dbReference type="GO" id="GO:0002291">
    <property type="term" value="P:T cell activation via T cell receptor contact with antigen bound to MHC molecule on antigen presenting cell"/>
    <property type="evidence" value="ECO:0000250"/>
    <property type="project" value="UniProtKB"/>
</dbReference>
<dbReference type="CDD" id="cd11269">
    <property type="entry name" value="Sema_6D"/>
    <property type="match status" value="1"/>
</dbReference>
<dbReference type="FunFam" id="3.30.1680.10:FF:000004">
    <property type="entry name" value="semaphorin-6D isoform X1"/>
    <property type="match status" value="1"/>
</dbReference>
<dbReference type="FunFam" id="2.130.10.10:FF:000013">
    <property type="entry name" value="semaphorin-6D isoform X2"/>
    <property type="match status" value="1"/>
</dbReference>
<dbReference type="Gene3D" id="3.30.1680.10">
    <property type="entry name" value="ligand-binding face of the semaphorins, domain 2"/>
    <property type="match status" value="1"/>
</dbReference>
<dbReference type="Gene3D" id="2.130.10.10">
    <property type="entry name" value="YVTN repeat-like/Quinoprotein amine dehydrogenase"/>
    <property type="match status" value="1"/>
</dbReference>
<dbReference type="InterPro" id="IPR002165">
    <property type="entry name" value="Plexin_repeat"/>
</dbReference>
<dbReference type="InterPro" id="IPR016201">
    <property type="entry name" value="PSI"/>
</dbReference>
<dbReference type="InterPro" id="IPR001627">
    <property type="entry name" value="Semap_dom"/>
</dbReference>
<dbReference type="InterPro" id="IPR036352">
    <property type="entry name" value="Semap_dom_sf"/>
</dbReference>
<dbReference type="InterPro" id="IPR027231">
    <property type="entry name" value="Semaphorin"/>
</dbReference>
<dbReference type="InterPro" id="IPR015943">
    <property type="entry name" value="WD40/YVTN_repeat-like_dom_sf"/>
</dbReference>
<dbReference type="PANTHER" id="PTHR11036">
    <property type="entry name" value="SEMAPHORIN"/>
    <property type="match status" value="1"/>
</dbReference>
<dbReference type="PANTHER" id="PTHR11036:SF65">
    <property type="entry name" value="SEMAPHORIN-6D"/>
    <property type="match status" value="1"/>
</dbReference>
<dbReference type="Pfam" id="PF01437">
    <property type="entry name" value="PSI"/>
    <property type="match status" value="1"/>
</dbReference>
<dbReference type="Pfam" id="PF01403">
    <property type="entry name" value="Sema"/>
    <property type="match status" value="1"/>
</dbReference>
<dbReference type="SMART" id="SM00423">
    <property type="entry name" value="PSI"/>
    <property type="match status" value="1"/>
</dbReference>
<dbReference type="SMART" id="SM00630">
    <property type="entry name" value="Sema"/>
    <property type="match status" value="1"/>
</dbReference>
<dbReference type="SUPFAM" id="SSF103575">
    <property type="entry name" value="Plexin repeat"/>
    <property type="match status" value="1"/>
</dbReference>
<dbReference type="SUPFAM" id="SSF101912">
    <property type="entry name" value="Sema domain"/>
    <property type="match status" value="1"/>
</dbReference>
<dbReference type="PROSITE" id="PS51004">
    <property type="entry name" value="SEMA"/>
    <property type="match status" value="1"/>
</dbReference>
<sequence length="1017" mass="113566">MRVFLLCAYILLLMISQLRAVSFPEDDEPLNTVDYHYSRQYPVFRGRPSGNESQHRLDFQLMLKIRDTLYIAGRDQVYTVNLNEMPKTEVIPSKKLTWRSRQQDRENCAMKGKHKDECHNFIKVFVPRNDEMVFVCGTNAFNPMCRYYRLSTLEYDGEEISGLARCPFDARQTNVALFADGKLYSATVADFLASDAVIYRSMGDGSALRTIKYDSKWIKEPHFLHAIEYGNYVYFFFREIAVEHNNLGKAVYSRVARICKNDMGGSQRVLEKHWTSFLKARLNCSVPGDSFFYFDVLQSITDIIQINGIPTVVGVFTTQLNSIPGSAVCAFSMDDIEKVFKGRFKEQKTPDSVWTAVPEDKVPKPRPGCCAKHGLAEAYKTSIDFPDETLSFIKSHPLMDSAVPPIADEPWFTKTRVRYRLTAIAVDHSAGPYQNYTVIFVGSEAGVVLKVLAKTSPFSLNDSVLLEEIEAYNHAKCNAENEEDKKVISLQLDKNHHALYVAFSSCVIRIPLSRCERYGSCKKSCIASRDPYCGWLSQGSCGRVTPGMLAEGYEQDAEFGNTAHLGDCHEILPTSTTPDYKIFGGPTSGVRWEVQSGESNQMVHMNVLITCVFAAFVLGAFIAGVAVYCYRDMFVRKNRKIHKDAESAQSCTDSSGSFAKLNGLFDSPVKEYQQNIDSPKLYSNLLTSRKELPPNGDTKSMVMDHRGQPPELAALPTPESTPVLHQKTLQAMKSHSEKAHGHGASRKETPQFFPSSPPPHSPLSHGHIPSAIVLPNATHDYNTSFSNSNAHKAEKKLQNIDHPLTKSSSKRDHRRSVDSRNTLNDLLKHLNDPNSNPKAIMGDIQMAHQNLMLDPMGSMSEVPPKVPNREASLYSPPSTLPRNSPTKRVDVPTTPGVPMTSLGRQRGYHKNSSQRHSISAMPKNLNSPNGVLLSRQPSMNHGGYMPTPTGAKVDYIQGTPVSVHLQPSLSRQSSYTSNGTLPRTGLKRTPSLKPDVPPKPSFVPQTPSVRPLNKYTY</sequence>
<gene>
    <name type="primary">SEMA6D</name>
</gene>
<proteinExistence type="evidence at transcript level"/>
<name>SEM6D_PONAB</name>